<dbReference type="EMBL" id="AAFI02000085">
    <property type="protein sequence ID" value="EAL64226.1"/>
    <property type="molecule type" value="Genomic_DNA"/>
</dbReference>
<dbReference type="RefSeq" id="XP_637730.1">
    <property type="nucleotide sequence ID" value="XM_632638.1"/>
</dbReference>
<dbReference type="SMR" id="Q54LV0"/>
<dbReference type="FunCoup" id="Q54LV0">
    <property type="interactions" value="715"/>
</dbReference>
<dbReference type="STRING" id="44689.Q54LV0"/>
<dbReference type="PaxDb" id="44689-DDB0219935"/>
<dbReference type="EnsemblProtists" id="EAL64226">
    <property type="protein sequence ID" value="EAL64226"/>
    <property type="gene ID" value="DDB_G0286403"/>
</dbReference>
<dbReference type="GeneID" id="8625595"/>
<dbReference type="KEGG" id="ddi:DDB_G0286403"/>
<dbReference type="dictyBase" id="DDB_G0286403">
    <property type="gene designation" value="smc4"/>
</dbReference>
<dbReference type="VEuPathDB" id="AmoebaDB:DDB_G0286403"/>
<dbReference type="eggNOG" id="KOG0996">
    <property type="taxonomic scope" value="Eukaryota"/>
</dbReference>
<dbReference type="HOGENOM" id="CLU_001042_4_1_1"/>
<dbReference type="InParanoid" id="Q54LV0"/>
<dbReference type="OMA" id="CPALDNM"/>
<dbReference type="PhylomeDB" id="Q54LV0"/>
<dbReference type="PRO" id="PR:Q54LV0"/>
<dbReference type="Proteomes" id="UP000002195">
    <property type="component" value="Chromosome 4"/>
</dbReference>
<dbReference type="GO" id="GO:0000796">
    <property type="term" value="C:condensin complex"/>
    <property type="evidence" value="ECO:0000250"/>
    <property type="project" value="dictyBase"/>
</dbReference>
<dbReference type="GO" id="GO:0005737">
    <property type="term" value="C:cytoplasm"/>
    <property type="evidence" value="ECO:0000250"/>
    <property type="project" value="dictyBase"/>
</dbReference>
<dbReference type="GO" id="GO:0005634">
    <property type="term" value="C:nucleus"/>
    <property type="evidence" value="ECO:0000250"/>
    <property type="project" value="dictyBase"/>
</dbReference>
<dbReference type="GO" id="GO:0005524">
    <property type="term" value="F:ATP binding"/>
    <property type="evidence" value="ECO:0007669"/>
    <property type="project" value="UniProtKB-KW"/>
</dbReference>
<dbReference type="GO" id="GO:0051301">
    <property type="term" value="P:cell division"/>
    <property type="evidence" value="ECO:0007669"/>
    <property type="project" value="UniProtKB-KW"/>
</dbReference>
<dbReference type="GO" id="GO:0007059">
    <property type="term" value="P:chromosome segregation"/>
    <property type="evidence" value="ECO:0000250"/>
    <property type="project" value="dictyBase"/>
</dbReference>
<dbReference type="GO" id="GO:0007076">
    <property type="term" value="P:mitotic chromosome condensation"/>
    <property type="evidence" value="ECO:0000250"/>
    <property type="project" value="dictyBase"/>
</dbReference>
<dbReference type="GO" id="GO:0000070">
    <property type="term" value="P:mitotic sister chromatid segregation"/>
    <property type="evidence" value="ECO:0000250"/>
    <property type="project" value="dictyBase"/>
</dbReference>
<dbReference type="FunFam" id="3.40.50.300:FF:000481">
    <property type="entry name" value="Structural maintenance of chromosomes 4"/>
    <property type="match status" value="1"/>
</dbReference>
<dbReference type="FunFam" id="3.40.50.300:FF:000585">
    <property type="entry name" value="Structural maintenance of chromosomes 4"/>
    <property type="match status" value="1"/>
</dbReference>
<dbReference type="Gene3D" id="1.20.1060.20">
    <property type="match status" value="1"/>
</dbReference>
<dbReference type="Gene3D" id="3.30.70.1620">
    <property type="match status" value="1"/>
</dbReference>
<dbReference type="Gene3D" id="3.40.50.300">
    <property type="entry name" value="P-loop containing nucleotide triphosphate hydrolases"/>
    <property type="match status" value="2"/>
</dbReference>
<dbReference type="InterPro" id="IPR027417">
    <property type="entry name" value="P-loop_NTPase"/>
</dbReference>
<dbReference type="InterPro" id="IPR003395">
    <property type="entry name" value="RecF/RecN/SMC_N"/>
</dbReference>
<dbReference type="InterPro" id="IPR010935">
    <property type="entry name" value="SMC_hinge"/>
</dbReference>
<dbReference type="InterPro" id="IPR036277">
    <property type="entry name" value="SMC_hinge_sf"/>
</dbReference>
<dbReference type="PANTHER" id="PTHR18937:SF172">
    <property type="entry name" value="STRUCTURAL MAINTENANCE OF CHROMOSOMES PROTEIN"/>
    <property type="match status" value="1"/>
</dbReference>
<dbReference type="PANTHER" id="PTHR18937">
    <property type="entry name" value="STRUCTURAL MAINTENANCE OF CHROMOSOMES SMC FAMILY MEMBER"/>
    <property type="match status" value="1"/>
</dbReference>
<dbReference type="Pfam" id="PF06470">
    <property type="entry name" value="SMC_hinge"/>
    <property type="match status" value="1"/>
</dbReference>
<dbReference type="Pfam" id="PF02463">
    <property type="entry name" value="SMC_N"/>
    <property type="match status" value="1"/>
</dbReference>
<dbReference type="SMART" id="SM00968">
    <property type="entry name" value="SMC_hinge"/>
    <property type="match status" value="1"/>
</dbReference>
<dbReference type="SUPFAM" id="SSF52540">
    <property type="entry name" value="P-loop containing nucleoside triphosphate hydrolases"/>
    <property type="match status" value="2"/>
</dbReference>
<dbReference type="SUPFAM" id="SSF75553">
    <property type="entry name" value="Smc hinge domain"/>
    <property type="match status" value="1"/>
</dbReference>
<feature type="chain" id="PRO_0000328140" description="Structural maintenance of chromosomes protein 4">
    <location>
        <begin position="1"/>
        <end position="1415"/>
    </location>
</feature>
<feature type="domain" description="SMC hinge">
    <location>
        <begin position="695"/>
        <end position="812"/>
    </location>
</feature>
<feature type="region of interest" description="Disordered" evidence="3">
    <location>
        <begin position="1"/>
        <end position="154"/>
    </location>
</feature>
<feature type="region of interest" description="Disordered" evidence="3">
    <location>
        <begin position="1385"/>
        <end position="1415"/>
    </location>
</feature>
<feature type="coiled-coil region" evidence="2">
    <location>
        <begin position="361"/>
        <end position="479"/>
    </location>
</feature>
<feature type="coiled-coil region" evidence="2">
    <location>
        <begin position="533"/>
        <end position="675"/>
    </location>
</feature>
<feature type="coiled-coil region" evidence="2">
    <location>
        <begin position="855"/>
        <end position="1120"/>
    </location>
</feature>
<feature type="coiled-coil region" evidence="2">
    <location>
        <begin position="1162"/>
        <end position="1233"/>
    </location>
</feature>
<feature type="compositionally biased region" description="Acidic residues" evidence="3">
    <location>
        <begin position="1"/>
        <end position="16"/>
    </location>
</feature>
<feature type="compositionally biased region" description="Acidic residues" evidence="3">
    <location>
        <begin position="24"/>
        <end position="60"/>
    </location>
</feature>
<feature type="compositionally biased region" description="Low complexity" evidence="3">
    <location>
        <begin position="71"/>
        <end position="80"/>
    </location>
</feature>
<feature type="compositionally biased region" description="Low complexity" evidence="3">
    <location>
        <begin position="100"/>
        <end position="150"/>
    </location>
</feature>
<feature type="compositionally biased region" description="Low complexity" evidence="3">
    <location>
        <begin position="1386"/>
        <end position="1415"/>
    </location>
</feature>
<feature type="binding site" evidence="2">
    <location>
        <begin position="189"/>
        <end position="196"/>
    </location>
    <ligand>
        <name>ATP</name>
        <dbReference type="ChEBI" id="CHEBI:30616"/>
    </ligand>
</feature>
<keyword id="KW-0067">ATP-binding</keyword>
<keyword id="KW-0131">Cell cycle</keyword>
<keyword id="KW-0132">Cell division</keyword>
<keyword id="KW-0175">Coiled coil</keyword>
<keyword id="KW-0226">DNA condensation</keyword>
<keyword id="KW-0498">Mitosis</keyword>
<keyword id="KW-0547">Nucleotide-binding</keyword>
<keyword id="KW-0539">Nucleus</keyword>
<keyword id="KW-1185">Reference proteome</keyword>
<sequence length="1415" mass="161555">MVEDEEINDQISEEEEEKKKNNDSDEEMKDIDEEEEEEEEEEEEEEEEEKEEEEEEEEEETPKKPMPPPQSKAKPSSQPPDIKKASQQSQTQKNTPPPIQTSQSSQSSQSSQSSQQQQPKNISQTQQPKNTPPLQSSQTSQTSQKTPVSSNNGIEKRLMITKMVMENFKSYAGAQEVGPFHKCFSSVVGPNGSGKSNVIDAMLFVFGYRAKQIRLNKISELIHNSENHKNLTNGRVSVHFQEIIDLPGEDNYEVVKGSEFVVTRTAQKTGNNKDGVSKYYLNDKVVKLDDLKTILKDKGIDLDNNRFLILQGEVEQIAMMKPKGVHPGEEGLLEYLEDIIGSKKYLPDIEATSKLIEDIGDKRTSSNNRMKVVEKEKDALQQERDNALEYIDKELKLIHCKSIHYQIGRSKPEREKNEIAAKQEMVEKQLEQELVTQKASNDKLLEFEKNLKQQNKQLDELNKQMAKCKNELLTTEKKGVKYKEETKHLKTKVKKNNSVIEEETKKQAEFERSTIIHKQDIVRFEKEYVELPKELIVEEKKLESMLNSLKGEVTELQREMEEKQKQLLPWSKKHSEAKAVVDLKTSELAVLSKDFNGATQNLDDAIKALEDAKTISSTRKNNITKSKKELESVKAIIVDLEKRLASGKVTEENLYRNTMDAKRQLEQIKTNLSENSSRNTILDRLLKIKESGQISGIHGRLGDLGAIDQKYDVAISTAAFSQMDNIIVETTAAAEACVELLRKENLGRATFMILENLEYQRQNLGPVQTPNNTPRLFDLIKMKDEKKYATAFFTAVGHTLVADTLDEATKIAYGAKRHRVVTLDGSLIDTSGAMSGGGLKPRVGAMNSKLKGDPKEDKKKLIELQDNLSQLDSDLRQCRDELVEIENQIQQAQNRRSELELELPKMDMDIKAAITKCEELTKVIPQLKNKAKLSTEKKEQIDSIKESLIVDQKSLDKVQEKVNKLESEVQEIQNSILNVGGPQLKMQKNKVESLQSRIDSNQTNTTKANVQIKSLAKSMEKSIKILNENTKEKDENEAALAEILEKYKSLEKENLKATEAMEAVSEQLREKEEETKEIRKEHEKAKKVIEKIKVSNSKLETQIEEFKTLINEKQAEIADCLSKFANQAKKAKIYKDYVDESLINQVSAILTPEEIEQYMEATEQQNLIAKIHELTTQIQKISKENNVNIEVVKDFQKKEQEYHSRKAEFDEIEKERDNLSKRYESLRKNRLDEFMAGFTIITMKLKEIYQMITLGGDAELEIIDREDPFQEGISFSVRPPKKSWKNISNLSGGEKTLSSLALVFALHHYKPNALYVMDEIDAALDFKNVSIIANYIKERTKNAQFIIISLRNYMFELADRLVGIYKTDNCTKSVTINPNSFTSLSTTTTTTNNSQQQQQQKQQQKQQQQNSTSQK</sequence>
<organism>
    <name type="scientific">Dictyostelium discoideum</name>
    <name type="common">Social amoeba</name>
    <dbReference type="NCBI Taxonomy" id="44689"/>
    <lineage>
        <taxon>Eukaryota</taxon>
        <taxon>Amoebozoa</taxon>
        <taxon>Evosea</taxon>
        <taxon>Eumycetozoa</taxon>
        <taxon>Dictyostelia</taxon>
        <taxon>Dictyosteliales</taxon>
        <taxon>Dictyosteliaceae</taxon>
        <taxon>Dictyostelium</taxon>
    </lineage>
</organism>
<reference key="1">
    <citation type="journal article" date="2005" name="Nature">
        <title>The genome of the social amoeba Dictyostelium discoideum.</title>
        <authorList>
            <person name="Eichinger L."/>
            <person name="Pachebat J.A."/>
            <person name="Gloeckner G."/>
            <person name="Rajandream M.A."/>
            <person name="Sucgang R."/>
            <person name="Berriman M."/>
            <person name="Song J."/>
            <person name="Olsen R."/>
            <person name="Szafranski K."/>
            <person name="Xu Q."/>
            <person name="Tunggal B."/>
            <person name="Kummerfeld S."/>
            <person name="Madera M."/>
            <person name="Konfortov B.A."/>
            <person name="Rivero F."/>
            <person name="Bankier A.T."/>
            <person name="Lehmann R."/>
            <person name="Hamlin N."/>
            <person name="Davies R."/>
            <person name="Gaudet P."/>
            <person name="Fey P."/>
            <person name="Pilcher K."/>
            <person name="Chen G."/>
            <person name="Saunders D."/>
            <person name="Sodergren E.J."/>
            <person name="Davis P."/>
            <person name="Kerhornou A."/>
            <person name="Nie X."/>
            <person name="Hall N."/>
            <person name="Anjard C."/>
            <person name="Hemphill L."/>
            <person name="Bason N."/>
            <person name="Farbrother P."/>
            <person name="Desany B."/>
            <person name="Just E."/>
            <person name="Morio T."/>
            <person name="Rost R."/>
            <person name="Churcher C.M."/>
            <person name="Cooper J."/>
            <person name="Haydock S."/>
            <person name="van Driessche N."/>
            <person name="Cronin A."/>
            <person name="Goodhead I."/>
            <person name="Muzny D.M."/>
            <person name="Mourier T."/>
            <person name="Pain A."/>
            <person name="Lu M."/>
            <person name="Harper D."/>
            <person name="Lindsay R."/>
            <person name="Hauser H."/>
            <person name="James K.D."/>
            <person name="Quiles M."/>
            <person name="Madan Babu M."/>
            <person name="Saito T."/>
            <person name="Buchrieser C."/>
            <person name="Wardroper A."/>
            <person name="Felder M."/>
            <person name="Thangavelu M."/>
            <person name="Johnson D."/>
            <person name="Knights A."/>
            <person name="Loulseged H."/>
            <person name="Mungall K.L."/>
            <person name="Oliver K."/>
            <person name="Price C."/>
            <person name="Quail M.A."/>
            <person name="Urushihara H."/>
            <person name="Hernandez J."/>
            <person name="Rabbinowitsch E."/>
            <person name="Steffen D."/>
            <person name="Sanders M."/>
            <person name="Ma J."/>
            <person name="Kohara Y."/>
            <person name="Sharp S."/>
            <person name="Simmonds M.N."/>
            <person name="Spiegler S."/>
            <person name="Tivey A."/>
            <person name="Sugano S."/>
            <person name="White B."/>
            <person name="Walker D."/>
            <person name="Woodward J.R."/>
            <person name="Winckler T."/>
            <person name="Tanaka Y."/>
            <person name="Shaulsky G."/>
            <person name="Schleicher M."/>
            <person name="Weinstock G.M."/>
            <person name="Rosenthal A."/>
            <person name="Cox E.C."/>
            <person name="Chisholm R.L."/>
            <person name="Gibbs R.A."/>
            <person name="Loomis W.F."/>
            <person name="Platzer M."/>
            <person name="Kay R.R."/>
            <person name="Williams J.G."/>
            <person name="Dear P.H."/>
            <person name="Noegel A.A."/>
            <person name="Barrell B.G."/>
            <person name="Kuspa A."/>
        </authorList>
    </citation>
    <scope>NUCLEOTIDE SEQUENCE [LARGE SCALE GENOMIC DNA]</scope>
    <source>
        <strain>AX4</strain>
    </source>
</reference>
<proteinExistence type="inferred from homology"/>
<gene>
    <name type="primary">smc4</name>
    <name type="ORF">DDB_G0286403</name>
</gene>
<name>SMC4_DICDI</name>
<accession>Q54LV0</accession>
<comment type="function">
    <text evidence="1">Central component of the condensin complex, a complex required for conversion of interphase chromatin into mitotic-like condense chromosomes. The condensin complex probably introduces positive supercoils into relaxed DNA in the presence of type I topoisomerases and converts nicked DNA into positive knotted forms in the presence of type II topoisomerases (By similarity).</text>
</comment>
<comment type="subunit">
    <text evidence="1">Forms a heterodimer with smc2. Component of the condensin complex, which contains the smc2-smc4 heterodimer (By similarity).</text>
</comment>
<comment type="subcellular location">
    <subcellularLocation>
        <location evidence="1">Nucleus</location>
    </subcellularLocation>
</comment>
<comment type="domain">
    <text evidence="1">The SMC hinge domain, which separates the large intramolecular coiled coil regions, allows the heterodimerization with smc2 forming a V-shaped heterodimer.</text>
</comment>
<comment type="similarity">
    <text evidence="4">Belongs to the SMC family. SMC4 subfamily.</text>
</comment>
<protein>
    <recommendedName>
        <fullName>Structural maintenance of chromosomes protein 4</fullName>
        <shortName>SMC protein 4</shortName>
        <shortName>SMC-4</shortName>
    </recommendedName>
</protein>
<evidence type="ECO:0000250" key="1"/>
<evidence type="ECO:0000255" key="2"/>
<evidence type="ECO:0000256" key="3">
    <source>
        <dbReference type="SAM" id="MobiDB-lite"/>
    </source>
</evidence>
<evidence type="ECO:0000305" key="4"/>